<reference key="1">
    <citation type="journal article" date="2012" name="BMC Genomics">
        <title>Comparative genomics and transcriptomics of lineages I, II, and III strains of Listeria monocytogenes.</title>
        <authorList>
            <person name="Hain T."/>
            <person name="Ghai R."/>
            <person name="Billion A."/>
            <person name="Kuenne C.T."/>
            <person name="Steinweg C."/>
            <person name="Izar B."/>
            <person name="Mohamed W."/>
            <person name="Mraheil M."/>
            <person name="Domann E."/>
            <person name="Schaffrath S."/>
            <person name="Karst U."/>
            <person name="Goesmann A."/>
            <person name="Oehm S."/>
            <person name="Puhler A."/>
            <person name="Merkl R."/>
            <person name="Vorwerk S."/>
            <person name="Glaser P."/>
            <person name="Garrido P."/>
            <person name="Rusniok C."/>
            <person name="Buchrieser C."/>
            <person name="Goebel W."/>
            <person name="Chakraborty T."/>
        </authorList>
    </citation>
    <scope>NUCLEOTIDE SEQUENCE [LARGE SCALE GENOMIC DNA]</scope>
    <source>
        <strain>CLIP80459</strain>
    </source>
</reference>
<sequence length="248" mass="28413">MTRYKAIISYDGSGFYGYQVQPNTRTVQAEIEKALTKMHKGKTVRITASGRTDTGVHAKGQVIHFDSELDITAEKFQKALQVMTPFDISFLTVEEVPDDFHARFGTVGKEYRYVVKRTKIFDPFSRNFALHYPYELDISKMKLASKRLIGEHDFTSFCSARTERDSKVRTLYSIDFYEEDDETLVIAFQGNGFLYNMVRILTGTLLDAGQGRISPDDISEALLARDRQKLISKTAPPQGLYLWRVDYE</sequence>
<dbReference type="EC" id="5.4.99.12" evidence="1"/>
<dbReference type="EMBL" id="FM242711">
    <property type="protein sequence ID" value="CAS06320.1"/>
    <property type="molecule type" value="Genomic_DNA"/>
</dbReference>
<dbReference type="RefSeq" id="WP_003726076.1">
    <property type="nucleotide sequence ID" value="NC_012488.1"/>
</dbReference>
<dbReference type="SMR" id="C1KZ13"/>
<dbReference type="KEGG" id="lmc:Lm4b_02565"/>
<dbReference type="HOGENOM" id="CLU_014673_0_1_9"/>
<dbReference type="GO" id="GO:0003723">
    <property type="term" value="F:RNA binding"/>
    <property type="evidence" value="ECO:0007669"/>
    <property type="project" value="InterPro"/>
</dbReference>
<dbReference type="GO" id="GO:0160147">
    <property type="term" value="F:tRNA pseudouridine(38-40) synthase activity"/>
    <property type="evidence" value="ECO:0007669"/>
    <property type="project" value="UniProtKB-EC"/>
</dbReference>
<dbReference type="GO" id="GO:0031119">
    <property type="term" value="P:tRNA pseudouridine synthesis"/>
    <property type="evidence" value="ECO:0007669"/>
    <property type="project" value="UniProtKB-UniRule"/>
</dbReference>
<dbReference type="CDD" id="cd02570">
    <property type="entry name" value="PseudoU_synth_EcTruA"/>
    <property type="match status" value="1"/>
</dbReference>
<dbReference type="FunFam" id="3.30.70.580:FF:000001">
    <property type="entry name" value="tRNA pseudouridine synthase A"/>
    <property type="match status" value="1"/>
</dbReference>
<dbReference type="FunFam" id="3.30.70.660:FF:000004">
    <property type="entry name" value="tRNA pseudouridine synthase A"/>
    <property type="match status" value="1"/>
</dbReference>
<dbReference type="Gene3D" id="3.30.70.660">
    <property type="entry name" value="Pseudouridine synthase I, catalytic domain, C-terminal subdomain"/>
    <property type="match status" value="1"/>
</dbReference>
<dbReference type="Gene3D" id="3.30.70.580">
    <property type="entry name" value="Pseudouridine synthase I, catalytic domain, N-terminal subdomain"/>
    <property type="match status" value="1"/>
</dbReference>
<dbReference type="HAMAP" id="MF_00171">
    <property type="entry name" value="TruA"/>
    <property type="match status" value="1"/>
</dbReference>
<dbReference type="InterPro" id="IPR020103">
    <property type="entry name" value="PsdUridine_synth_cat_dom_sf"/>
</dbReference>
<dbReference type="InterPro" id="IPR001406">
    <property type="entry name" value="PsdUridine_synth_TruA"/>
</dbReference>
<dbReference type="InterPro" id="IPR020097">
    <property type="entry name" value="PsdUridine_synth_TruA_a/b_dom"/>
</dbReference>
<dbReference type="InterPro" id="IPR020095">
    <property type="entry name" value="PsdUridine_synth_TruA_C"/>
</dbReference>
<dbReference type="InterPro" id="IPR020094">
    <property type="entry name" value="TruA/RsuA/RluB/E/F_N"/>
</dbReference>
<dbReference type="NCBIfam" id="TIGR00071">
    <property type="entry name" value="hisT_truA"/>
    <property type="match status" value="1"/>
</dbReference>
<dbReference type="PANTHER" id="PTHR11142">
    <property type="entry name" value="PSEUDOURIDYLATE SYNTHASE"/>
    <property type="match status" value="1"/>
</dbReference>
<dbReference type="PANTHER" id="PTHR11142:SF0">
    <property type="entry name" value="TRNA PSEUDOURIDINE SYNTHASE-LIKE 1"/>
    <property type="match status" value="1"/>
</dbReference>
<dbReference type="Pfam" id="PF01416">
    <property type="entry name" value="PseudoU_synth_1"/>
    <property type="match status" value="2"/>
</dbReference>
<dbReference type="PIRSF" id="PIRSF001430">
    <property type="entry name" value="tRNA_psdUrid_synth"/>
    <property type="match status" value="1"/>
</dbReference>
<dbReference type="SUPFAM" id="SSF55120">
    <property type="entry name" value="Pseudouridine synthase"/>
    <property type="match status" value="1"/>
</dbReference>
<comment type="function">
    <text evidence="1">Formation of pseudouridine at positions 38, 39 and 40 in the anticodon stem and loop of transfer RNAs.</text>
</comment>
<comment type="catalytic activity">
    <reaction evidence="1">
        <text>uridine(38/39/40) in tRNA = pseudouridine(38/39/40) in tRNA</text>
        <dbReference type="Rhea" id="RHEA:22376"/>
        <dbReference type="Rhea" id="RHEA-COMP:10085"/>
        <dbReference type="Rhea" id="RHEA-COMP:10087"/>
        <dbReference type="ChEBI" id="CHEBI:65314"/>
        <dbReference type="ChEBI" id="CHEBI:65315"/>
        <dbReference type="EC" id="5.4.99.12"/>
    </reaction>
</comment>
<comment type="subunit">
    <text evidence="1">Homodimer.</text>
</comment>
<comment type="similarity">
    <text evidence="1">Belongs to the tRNA pseudouridine synthase TruA family.</text>
</comment>
<accession>C1KZ13</accession>
<feature type="chain" id="PRO_1000203695" description="tRNA pseudouridine synthase A">
    <location>
        <begin position="1"/>
        <end position="248"/>
    </location>
</feature>
<feature type="active site" description="Nucleophile" evidence="1">
    <location>
        <position position="53"/>
    </location>
</feature>
<feature type="binding site" evidence="1">
    <location>
        <position position="111"/>
    </location>
    <ligand>
        <name>substrate</name>
    </ligand>
</feature>
<protein>
    <recommendedName>
        <fullName evidence="1">tRNA pseudouridine synthase A</fullName>
        <ecNumber evidence="1">5.4.99.12</ecNumber>
    </recommendedName>
    <alternativeName>
        <fullName evidence="1">tRNA pseudouridine(38-40) synthase</fullName>
    </alternativeName>
    <alternativeName>
        <fullName evidence="1">tRNA pseudouridylate synthase I</fullName>
    </alternativeName>
    <alternativeName>
        <fullName evidence="1">tRNA-uridine isomerase I</fullName>
    </alternativeName>
</protein>
<name>TRUA_LISMC</name>
<gene>
    <name evidence="1" type="primary">truA</name>
    <name type="ordered locus">Lm4b_02565</name>
</gene>
<organism>
    <name type="scientific">Listeria monocytogenes serotype 4b (strain CLIP80459)</name>
    <dbReference type="NCBI Taxonomy" id="568819"/>
    <lineage>
        <taxon>Bacteria</taxon>
        <taxon>Bacillati</taxon>
        <taxon>Bacillota</taxon>
        <taxon>Bacilli</taxon>
        <taxon>Bacillales</taxon>
        <taxon>Listeriaceae</taxon>
        <taxon>Listeria</taxon>
    </lineage>
</organism>
<evidence type="ECO:0000255" key="1">
    <source>
        <dbReference type="HAMAP-Rule" id="MF_00171"/>
    </source>
</evidence>
<proteinExistence type="inferred from homology"/>
<keyword id="KW-0413">Isomerase</keyword>
<keyword id="KW-0819">tRNA processing</keyword>